<sequence length="194" mass="20911">MPNWGGGNKCGACGRTVYHAEEVQCDGRSFHRCCFLCMVCRKNLDSTTVAIHDAEVYCKSCYGKKYGPKGYGYGQGAGTLNMDRGERLGIKPESSPSPHRPTTNPNTSKFAQKFGGAEKCSRCGDSVYAAEKVIGAGKPWHKNCFRCAKCGKSLESTTLTEKEGEIYCKGCYAKNFGPKGFGYGQGAGALVHAQ</sequence>
<reference key="1">
    <citation type="journal article" date="1993" name="Oncogene">
        <title>Suppression in transformed avian fibroblasts of a gene (crp) encoding a cysteine-rich protein containing LIM domains.</title>
        <authorList>
            <person name="Weiskirchen R."/>
            <person name="Bister K."/>
        </authorList>
    </citation>
    <scope>NUCLEOTIDE SEQUENCE [MRNA]</scope>
    <source>
        <tissue>Embryonic fibroblast</tissue>
    </source>
</reference>
<reference key="2">
    <citation type="journal article" date="1998" name="Biochemistry">
        <title>Structure and intramodular dynamics of the amino-terminal LIM domain from quail cysteine- and glycine-rich protein CRP2.</title>
        <authorList>
            <person name="Kontaxis G."/>
            <person name="Konrat R."/>
            <person name="Kraeutler B."/>
            <person name="Weiskirchen R."/>
            <person name="Bister K."/>
        </authorList>
    </citation>
    <scope>STRUCTURE BY NMR OF 8-67</scope>
</reference>
<reference key="3">
    <citation type="journal article" date="1997" name="J. Biol. Chem.">
        <title>Solution structure of the carboxyl-terminal LIM domain from quail cysteine-rich protein CRP2.</title>
        <authorList>
            <person name="Konrat R."/>
            <person name="Weiskirchen R."/>
            <person name="Krautler B."/>
            <person name="Bister K."/>
        </authorList>
    </citation>
    <scope>STRUCTURE BY NMR OF 117-175</scope>
</reference>
<proteinExistence type="evidence at protein level"/>
<name>CSRP2_COTJA</name>
<evidence type="ECO:0000250" key="1"/>
<evidence type="ECO:0000255" key="2"/>
<evidence type="ECO:0000255" key="3">
    <source>
        <dbReference type="PROSITE-ProRule" id="PRU00125"/>
    </source>
</evidence>
<evidence type="ECO:0000256" key="4">
    <source>
        <dbReference type="SAM" id="MobiDB-lite"/>
    </source>
</evidence>
<evidence type="ECO:0007829" key="5">
    <source>
        <dbReference type="PDB" id="1A7I"/>
    </source>
</evidence>
<evidence type="ECO:0007829" key="6">
    <source>
        <dbReference type="PDB" id="1CXX"/>
    </source>
</evidence>
<evidence type="ECO:0007829" key="7">
    <source>
        <dbReference type="PDB" id="1IBI"/>
    </source>
</evidence>
<evidence type="ECO:0007829" key="8">
    <source>
        <dbReference type="PDB" id="1QLI"/>
    </source>
</evidence>
<protein>
    <recommendedName>
        <fullName>Cysteine and glycine-rich protein 2</fullName>
    </recommendedName>
    <alternativeName>
        <fullName>Cysteine-rich protein 2</fullName>
        <shortName>CRP2</shortName>
    </alternativeName>
</protein>
<dbReference type="EMBL" id="Z21643">
    <property type="protein sequence ID" value="CAA79759.1"/>
    <property type="molecule type" value="mRNA"/>
</dbReference>
<dbReference type="PIR" id="S41761">
    <property type="entry name" value="S41761"/>
</dbReference>
<dbReference type="PDB" id="1A7I">
    <property type="method" value="NMR"/>
    <property type="chains" value="A=1-81"/>
</dbReference>
<dbReference type="PDB" id="1CXX">
    <property type="method" value="NMR"/>
    <property type="chains" value="A=82-194"/>
</dbReference>
<dbReference type="PDB" id="1IBI">
    <property type="method" value="NMR"/>
    <property type="chains" value="A=82-194"/>
</dbReference>
<dbReference type="PDB" id="1QLI">
    <property type="method" value="NMR"/>
    <property type="chains" value="A=82-194"/>
</dbReference>
<dbReference type="PDBsum" id="1A7I"/>
<dbReference type="PDBsum" id="1CXX"/>
<dbReference type="PDBsum" id="1IBI"/>
<dbReference type="PDBsum" id="1QLI"/>
<dbReference type="SMR" id="Q05158"/>
<dbReference type="Ensembl" id="ENSCJPT00005027650.1">
    <property type="protein sequence ID" value="ENSCJPP00005020016.1"/>
    <property type="gene ID" value="ENSCJPG00005016171.1"/>
</dbReference>
<dbReference type="GeneTree" id="ENSGT00940000154980"/>
<dbReference type="EvolutionaryTrace" id="Q05158"/>
<dbReference type="Proteomes" id="UP000694412">
    <property type="component" value="Chromosome 1"/>
</dbReference>
<dbReference type="GO" id="GO:0005634">
    <property type="term" value="C:nucleus"/>
    <property type="evidence" value="ECO:0007669"/>
    <property type="project" value="UniProtKB-SubCell"/>
</dbReference>
<dbReference type="GO" id="GO:0030018">
    <property type="term" value="C:Z disc"/>
    <property type="evidence" value="ECO:0007669"/>
    <property type="project" value="TreeGrafter"/>
</dbReference>
<dbReference type="GO" id="GO:0042805">
    <property type="term" value="F:actinin binding"/>
    <property type="evidence" value="ECO:0007669"/>
    <property type="project" value="TreeGrafter"/>
</dbReference>
<dbReference type="GO" id="GO:0008307">
    <property type="term" value="F:structural constituent of muscle"/>
    <property type="evidence" value="ECO:0007669"/>
    <property type="project" value="TreeGrafter"/>
</dbReference>
<dbReference type="GO" id="GO:0008270">
    <property type="term" value="F:zinc ion binding"/>
    <property type="evidence" value="ECO:0000315"/>
    <property type="project" value="CAFA"/>
</dbReference>
<dbReference type="GO" id="GO:0060537">
    <property type="term" value="P:muscle tissue development"/>
    <property type="evidence" value="ECO:0007669"/>
    <property type="project" value="TreeGrafter"/>
</dbReference>
<dbReference type="GO" id="GO:0045214">
    <property type="term" value="P:sarcomere organization"/>
    <property type="evidence" value="ECO:0007669"/>
    <property type="project" value="TreeGrafter"/>
</dbReference>
<dbReference type="CDD" id="cd09480">
    <property type="entry name" value="LIM1_CRP2"/>
    <property type="match status" value="1"/>
</dbReference>
<dbReference type="CDD" id="cd09840">
    <property type="entry name" value="LIM2_CRP2"/>
    <property type="match status" value="1"/>
</dbReference>
<dbReference type="DisProt" id="DP00438"/>
<dbReference type="FunFam" id="2.10.110.10:FF:000001">
    <property type="entry name" value="Cysteine and glycine-rich protein 1"/>
    <property type="match status" value="2"/>
</dbReference>
<dbReference type="Gene3D" id="2.10.110.10">
    <property type="entry name" value="Cysteine Rich Protein"/>
    <property type="match status" value="2"/>
</dbReference>
<dbReference type="InterPro" id="IPR001781">
    <property type="entry name" value="Znf_LIM"/>
</dbReference>
<dbReference type="PANTHER" id="PTHR24215:SF3">
    <property type="entry name" value="CYSTEINE AND GLYCINE-RICH PROTEIN 2"/>
    <property type="match status" value="1"/>
</dbReference>
<dbReference type="PANTHER" id="PTHR24215">
    <property type="entry name" value="RHO-GTPASE-ACTIVATING PROTEIN LRG1"/>
    <property type="match status" value="1"/>
</dbReference>
<dbReference type="Pfam" id="PF00412">
    <property type="entry name" value="LIM"/>
    <property type="match status" value="2"/>
</dbReference>
<dbReference type="SMART" id="SM00132">
    <property type="entry name" value="LIM"/>
    <property type="match status" value="2"/>
</dbReference>
<dbReference type="SUPFAM" id="SSF57716">
    <property type="entry name" value="Glucocorticoid receptor-like (DNA-binding domain)"/>
    <property type="match status" value="4"/>
</dbReference>
<dbReference type="PROSITE" id="PS00478">
    <property type="entry name" value="LIM_DOMAIN_1"/>
    <property type="match status" value="2"/>
</dbReference>
<dbReference type="PROSITE" id="PS50023">
    <property type="entry name" value="LIM_DOMAIN_2"/>
    <property type="match status" value="2"/>
</dbReference>
<organism>
    <name type="scientific">Coturnix japonica</name>
    <name type="common">Japanese quail</name>
    <name type="synonym">Coturnix coturnix japonica</name>
    <dbReference type="NCBI Taxonomy" id="93934"/>
    <lineage>
        <taxon>Eukaryota</taxon>
        <taxon>Metazoa</taxon>
        <taxon>Chordata</taxon>
        <taxon>Craniata</taxon>
        <taxon>Vertebrata</taxon>
        <taxon>Euteleostomi</taxon>
        <taxon>Archelosauria</taxon>
        <taxon>Archosauria</taxon>
        <taxon>Dinosauria</taxon>
        <taxon>Saurischia</taxon>
        <taxon>Theropoda</taxon>
        <taxon>Coelurosauria</taxon>
        <taxon>Aves</taxon>
        <taxon>Neognathae</taxon>
        <taxon>Galloanserae</taxon>
        <taxon>Galliformes</taxon>
        <taxon>Phasianidae</taxon>
        <taxon>Perdicinae</taxon>
        <taxon>Coturnix</taxon>
    </lineage>
</organism>
<keyword id="KW-0002">3D-structure</keyword>
<keyword id="KW-0217">Developmental protein</keyword>
<keyword id="KW-0221">Differentiation</keyword>
<keyword id="KW-0440">LIM domain</keyword>
<keyword id="KW-0479">Metal-binding</keyword>
<keyword id="KW-0539">Nucleus</keyword>
<keyword id="KW-1185">Reference proteome</keyword>
<keyword id="KW-0677">Repeat</keyword>
<keyword id="KW-0862">Zinc</keyword>
<feature type="initiator methionine" description="Removed" evidence="1">
    <location>
        <position position="1"/>
    </location>
</feature>
<feature type="chain" id="PRO_0000075725" description="Cysteine and glycine-rich protein 2">
    <location>
        <begin position="2"/>
        <end position="194"/>
    </location>
</feature>
<feature type="domain" description="LIM zinc-binding 1" evidence="3">
    <location>
        <begin position="10"/>
        <end position="61"/>
    </location>
</feature>
<feature type="domain" description="LIM zinc-binding 2" evidence="3">
    <location>
        <begin position="120"/>
        <end position="171"/>
    </location>
</feature>
<feature type="region of interest" description="Disordered" evidence="4">
    <location>
        <begin position="85"/>
        <end position="110"/>
    </location>
</feature>
<feature type="short sequence motif" description="Nuclear localization signal" evidence="2">
    <location>
        <begin position="64"/>
        <end position="69"/>
    </location>
</feature>
<feature type="compositionally biased region" description="Polar residues" evidence="4">
    <location>
        <begin position="94"/>
        <end position="110"/>
    </location>
</feature>
<feature type="strand" evidence="5">
    <location>
        <begin position="11"/>
        <end position="13"/>
    </location>
</feature>
<feature type="strand" evidence="5">
    <location>
        <begin position="22"/>
        <end position="25"/>
    </location>
</feature>
<feature type="strand" evidence="5">
    <location>
        <begin position="28"/>
        <end position="36"/>
    </location>
</feature>
<feature type="strand" evidence="5">
    <location>
        <begin position="38"/>
        <end position="40"/>
    </location>
</feature>
<feature type="strand" evidence="5">
    <location>
        <begin position="50"/>
        <end position="52"/>
    </location>
</feature>
<feature type="strand" evidence="5">
    <location>
        <begin position="55"/>
        <end position="57"/>
    </location>
</feature>
<feature type="helix" evidence="5">
    <location>
        <begin position="60"/>
        <end position="65"/>
    </location>
</feature>
<feature type="strand" evidence="8">
    <location>
        <begin position="118"/>
        <end position="120"/>
    </location>
</feature>
<feature type="turn" evidence="6">
    <location>
        <begin position="121"/>
        <end position="123"/>
    </location>
</feature>
<feature type="strand" evidence="6">
    <location>
        <begin position="129"/>
        <end position="131"/>
    </location>
</feature>
<feature type="strand" evidence="6">
    <location>
        <begin position="133"/>
        <end position="137"/>
    </location>
</feature>
<feature type="strand" evidence="8">
    <location>
        <begin position="138"/>
        <end position="140"/>
    </location>
</feature>
<feature type="turn" evidence="6">
    <location>
        <begin position="142"/>
        <end position="144"/>
    </location>
</feature>
<feature type="strand" evidence="6">
    <location>
        <begin position="148"/>
        <end position="150"/>
    </location>
</feature>
<feature type="strand" evidence="7">
    <location>
        <begin position="159"/>
        <end position="162"/>
    </location>
</feature>
<feature type="strand" evidence="7">
    <location>
        <begin position="165"/>
        <end position="167"/>
    </location>
</feature>
<feature type="helix" evidence="6">
    <location>
        <begin position="169"/>
        <end position="174"/>
    </location>
</feature>
<accession>Q05158</accession>
<gene>
    <name type="primary">CSRP2</name>
</gene>
<comment type="function">
    <text>Interacts with zyxin. May be a component of a signal transduction pathway that mediates adhesion-stimulated changes in gene expression. Totally down-regulated in transformed cells.</text>
</comment>
<comment type="subcellular location">
    <subcellularLocation>
        <location>Nucleus</location>
    </subcellularLocation>
</comment>